<feature type="chain" id="PRO_1000002424" description="Holliday junction branch migration complex subunit RuvA">
    <location>
        <begin position="1"/>
        <end position="183"/>
    </location>
</feature>
<feature type="region of interest" description="Domain I" evidence="1">
    <location>
        <begin position="1"/>
        <end position="64"/>
    </location>
</feature>
<feature type="region of interest" description="Domain II" evidence="1">
    <location>
        <begin position="65"/>
        <end position="139"/>
    </location>
</feature>
<feature type="region of interest" description="Domain III" evidence="1">
    <location>
        <begin position="139"/>
        <end position="183"/>
    </location>
</feature>
<feature type="region of interest" description="Flexible linker" evidence="1">
    <location>
        <position position="139"/>
    </location>
</feature>
<keyword id="KW-0963">Cytoplasm</keyword>
<keyword id="KW-0227">DNA damage</keyword>
<keyword id="KW-0233">DNA recombination</keyword>
<keyword id="KW-0234">DNA repair</keyword>
<keyword id="KW-0238">DNA-binding</keyword>
<name>RUVA_CAMJD</name>
<sequence length="183" mass="20046">MVVGIEGIITKKEPTFIIVKCASGLSYGIFISLFCSAKIQTQEKHEFFITQIIKEDSNKFYGFLDKDEQKMFEMLLKVNGVGANTAMAVCSSLDINSFYKALSLGDESVLKKVPGIGPKSAKRIIVELSDTRTKLENVSDDKSEALAALLTLGFKQEKIISVLASAQATGTSELIKEALKKLR</sequence>
<reference key="1">
    <citation type="submission" date="2007-07" db="EMBL/GenBank/DDBJ databases">
        <title>Complete genome sequence of Campylobacter jejuni subsp doylei 269.97 isolated from human blood.</title>
        <authorList>
            <person name="Fouts D.E."/>
            <person name="Mongodin E.F."/>
            <person name="Puiu D."/>
            <person name="Sebastian Y."/>
            <person name="Miller W.G."/>
            <person name="Mandrell R.E."/>
            <person name="Lastovica A.J."/>
            <person name="Nelson K.E."/>
        </authorList>
    </citation>
    <scope>NUCLEOTIDE SEQUENCE [LARGE SCALE GENOMIC DNA]</scope>
    <source>
        <strain>ATCC BAA-1458 / RM4099 / 269.97</strain>
    </source>
</reference>
<accession>A7H450</accession>
<proteinExistence type="inferred from homology"/>
<gene>
    <name evidence="1" type="primary">ruvA</name>
    <name type="ordered locus">JJD26997_1211</name>
</gene>
<dbReference type="EMBL" id="CP000768">
    <property type="protein sequence ID" value="ABS44223.1"/>
    <property type="molecule type" value="Genomic_DNA"/>
</dbReference>
<dbReference type="SMR" id="A7H450"/>
<dbReference type="KEGG" id="cjd:JJD26997_1211"/>
<dbReference type="HOGENOM" id="CLU_087936_3_1_7"/>
<dbReference type="Proteomes" id="UP000002302">
    <property type="component" value="Chromosome"/>
</dbReference>
<dbReference type="GO" id="GO:0005737">
    <property type="term" value="C:cytoplasm"/>
    <property type="evidence" value="ECO:0007669"/>
    <property type="project" value="UniProtKB-SubCell"/>
</dbReference>
<dbReference type="GO" id="GO:0009379">
    <property type="term" value="C:Holliday junction helicase complex"/>
    <property type="evidence" value="ECO:0007669"/>
    <property type="project" value="InterPro"/>
</dbReference>
<dbReference type="GO" id="GO:0048476">
    <property type="term" value="C:Holliday junction resolvase complex"/>
    <property type="evidence" value="ECO:0007669"/>
    <property type="project" value="UniProtKB-UniRule"/>
</dbReference>
<dbReference type="GO" id="GO:0005524">
    <property type="term" value="F:ATP binding"/>
    <property type="evidence" value="ECO:0007669"/>
    <property type="project" value="InterPro"/>
</dbReference>
<dbReference type="GO" id="GO:0000400">
    <property type="term" value="F:four-way junction DNA binding"/>
    <property type="evidence" value="ECO:0007669"/>
    <property type="project" value="UniProtKB-UniRule"/>
</dbReference>
<dbReference type="GO" id="GO:0009378">
    <property type="term" value="F:four-way junction helicase activity"/>
    <property type="evidence" value="ECO:0007669"/>
    <property type="project" value="InterPro"/>
</dbReference>
<dbReference type="GO" id="GO:0006310">
    <property type="term" value="P:DNA recombination"/>
    <property type="evidence" value="ECO:0007669"/>
    <property type="project" value="UniProtKB-UniRule"/>
</dbReference>
<dbReference type="GO" id="GO:0006281">
    <property type="term" value="P:DNA repair"/>
    <property type="evidence" value="ECO:0007669"/>
    <property type="project" value="UniProtKB-UniRule"/>
</dbReference>
<dbReference type="CDD" id="cd14332">
    <property type="entry name" value="UBA_RuvA_C"/>
    <property type="match status" value="1"/>
</dbReference>
<dbReference type="Gene3D" id="1.10.150.20">
    <property type="entry name" value="5' to 3' exonuclease, C-terminal subdomain"/>
    <property type="match status" value="1"/>
</dbReference>
<dbReference type="Gene3D" id="1.10.8.10">
    <property type="entry name" value="DNA helicase RuvA subunit, C-terminal domain"/>
    <property type="match status" value="1"/>
</dbReference>
<dbReference type="Gene3D" id="2.40.50.140">
    <property type="entry name" value="Nucleic acid-binding proteins"/>
    <property type="match status" value="1"/>
</dbReference>
<dbReference type="HAMAP" id="MF_00031">
    <property type="entry name" value="DNA_HJ_migration_RuvA"/>
    <property type="match status" value="1"/>
</dbReference>
<dbReference type="InterPro" id="IPR013849">
    <property type="entry name" value="DNA_helicase_Holl-junc_RuvA_I"/>
</dbReference>
<dbReference type="InterPro" id="IPR003583">
    <property type="entry name" value="Hlx-hairpin-Hlx_DNA-bd_motif"/>
</dbReference>
<dbReference type="InterPro" id="IPR012340">
    <property type="entry name" value="NA-bd_OB-fold"/>
</dbReference>
<dbReference type="InterPro" id="IPR000085">
    <property type="entry name" value="RuvA"/>
</dbReference>
<dbReference type="InterPro" id="IPR010994">
    <property type="entry name" value="RuvA_2-like"/>
</dbReference>
<dbReference type="InterPro" id="IPR011114">
    <property type="entry name" value="RuvA_C"/>
</dbReference>
<dbReference type="InterPro" id="IPR036267">
    <property type="entry name" value="RuvA_C_sf"/>
</dbReference>
<dbReference type="NCBIfam" id="TIGR00084">
    <property type="entry name" value="ruvA"/>
    <property type="match status" value="1"/>
</dbReference>
<dbReference type="Pfam" id="PF14520">
    <property type="entry name" value="HHH_5"/>
    <property type="match status" value="1"/>
</dbReference>
<dbReference type="Pfam" id="PF07499">
    <property type="entry name" value="RuvA_C"/>
    <property type="match status" value="1"/>
</dbReference>
<dbReference type="Pfam" id="PF01330">
    <property type="entry name" value="RuvA_N"/>
    <property type="match status" value="1"/>
</dbReference>
<dbReference type="SMART" id="SM00278">
    <property type="entry name" value="HhH1"/>
    <property type="match status" value="2"/>
</dbReference>
<dbReference type="SUPFAM" id="SSF46929">
    <property type="entry name" value="DNA helicase RuvA subunit, C-terminal domain"/>
    <property type="match status" value="1"/>
</dbReference>
<dbReference type="SUPFAM" id="SSF50249">
    <property type="entry name" value="Nucleic acid-binding proteins"/>
    <property type="match status" value="1"/>
</dbReference>
<dbReference type="SUPFAM" id="SSF47781">
    <property type="entry name" value="RuvA domain 2-like"/>
    <property type="match status" value="1"/>
</dbReference>
<protein>
    <recommendedName>
        <fullName evidence="1">Holliday junction branch migration complex subunit RuvA</fullName>
    </recommendedName>
</protein>
<organism>
    <name type="scientific">Campylobacter jejuni subsp. doylei (strain ATCC BAA-1458 / RM4099 / 269.97)</name>
    <dbReference type="NCBI Taxonomy" id="360109"/>
    <lineage>
        <taxon>Bacteria</taxon>
        <taxon>Pseudomonadati</taxon>
        <taxon>Campylobacterota</taxon>
        <taxon>Epsilonproteobacteria</taxon>
        <taxon>Campylobacterales</taxon>
        <taxon>Campylobacteraceae</taxon>
        <taxon>Campylobacter</taxon>
    </lineage>
</organism>
<comment type="function">
    <text evidence="1">The RuvA-RuvB-RuvC complex processes Holliday junction (HJ) DNA during genetic recombination and DNA repair, while the RuvA-RuvB complex plays an important role in the rescue of blocked DNA replication forks via replication fork reversal (RFR). RuvA specifically binds to HJ cruciform DNA, conferring on it an open structure. The RuvB hexamer acts as an ATP-dependent pump, pulling dsDNA into and through the RuvAB complex. HJ branch migration allows RuvC to scan DNA until it finds its consensus sequence, where it cleaves and resolves the cruciform DNA.</text>
</comment>
<comment type="subunit">
    <text evidence="1">Homotetramer. Forms an RuvA(8)-RuvB(12)-Holliday junction (HJ) complex. HJ DNA is sandwiched between 2 RuvA tetramers; dsDNA enters through RuvA and exits via RuvB. An RuvB hexamer assembles on each DNA strand where it exits the tetramer. Each RuvB hexamer is contacted by two RuvA subunits (via domain III) on 2 adjacent RuvB subunits; this complex drives branch migration. In the full resolvosome a probable DNA-RuvA(4)-RuvB(12)-RuvC(2) complex forms which resolves the HJ.</text>
</comment>
<comment type="subcellular location">
    <subcellularLocation>
        <location evidence="1">Cytoplasm</location>
    </subcellularLocation>
</comment>
<comment type="domain">
    <text evidence="1">Has three domains with a flexible linker between the domains II and III and assumes an 'L' shape. Domain III is highly mobile and contacts RuvB.</text>
</comment>
<comment type="similarity">
    <text evidence="1">Belongs to the RuvA family.</text>
</comment>
<evidence type="ECO:0000255" key="1">
    <source>
        <dbReference type="HAMAP-Rule" id="MF_00031"/>
    </source>
</evidence>